<reference key="1">
    <citation type="journal article" date="2004" name="Science">
        <title>The complete genome sequence of Propionibacterium acnes, a commensal of human skin.</title>
        <authorList>
            <person name="Brueggemann H."/>
            <person name="Henne A."/>
            <person name="Hoster F."/>
            <person name="Liesegang H."/>
            <person name="Wiezer A."/>
            <person name="Strittmatter A."/>
            <person name="Hujer S."/>
            <person name="Duerre P."/>
            <person name="Gottschalk G."/>
        </authorList>
    </citation>
    <scope>NUCLEOTIDE SEQUENCE [LARGE SCALE GENOMIC DNA]</scope>
    <source>
        <strain>DSM 16379 / KPA171202</strain>
    </source>
</reference>
<feature type="chain" id="PRO_0000249644" description="N-acetylmuramic acid 6-phosphate etherase">
    <location>
        <begin position="1"/>
        <end position="304"/>
    </location>
</feature>
<feature type="domain" description="SIS" evidence="1">
    <location>
        <begin position="57"/>
        <end position="220"/>
    </location>
</feature>
<feature type="active site" description="Proton donor" evidence="1">
    <location>
        <position position="85"/>
    </location>
</feature>
<feature type="active site" evidence="1">
    <location>
        <position position="116"/>
    </location>
</feature>
<dbReference type="EC" id="4.2.1.126" evidence="1"/>
<dbReference type="EMBL" id="AE017283">
    <property type="protein sequence ID" value="AAT82889.1"/>
    <property type="molecule type" value="Genomic_DNA"/>
</dbReference>
<dbReference type="RefSeq" id="WP_002513573.1">
    <property type="nucleotide sequence ID" value="NZ_CP025935.1"/>
</dbReference>
<dbReference type="SMR" id="Q6A8M7"/>
<dbReference type="EnsemblBacteria" id="AAT82889">
    <property type="protein sequence ID" value="AAT82889"/>
    <property type="gene ID" value="PPA1141"/>
</dbReference>
<dbReference type="KEGG" id="pac:PPA1141"/>
<dbReference type="eggNOG" id="COG2103">
    <property type="taxonomic scope" value="Bacteria"/>
</dbReference>
<dbReference type="HOGENOM" id="CLU_049049_1_1_11"/>
<dbReference type="UniPathway" id="UPA00342"/>
<dbReference type="Proteomes" id="UP000000603">
    <property type="component" value="Chromosome"/>
</dbReference>
<dbReference type="GO" id="GO:0097367">
    <property type="term" value="F:carbohydrate derivative binding"/>
    <property type="evidence" value="ECO:0007669"/>
    <property type="project" value="InterPro"/>
</dbReference>
<dbReference type="GO" id="GO:0016835">
    <property type="term" value="F:carbon-oxygen lyase activity"/>
    <property type="evidence" value="ECO:0007669"/>
    <property type="project" value="UniProtKB-UniRule"/>
</dbReference>
<dbReference type="GO" id="GO:0016803">
    <property type="term" value="F:ether hydrolase activity"/>
    <property type="evidence" value="ECO:0007669"/>
    <property type="project" value="TreeGrafter"/>
</dbReference>
<dbReference type="GO" id="GO:0046348">
    <property type="term" value="P:amino sugar catabolic process"/>
    <property type="evidence" value="ECO:0007669"/>
    <property type="project" value="InterPro"/>
</dbReference>
<dbReference type="GO" id="GO:0097173">
    <property type="term" value="P:N-acetylmuramic acid catabolic process"/>
    <property type="evidence" value="ECO:0007669"/>
    <property type="project" value="UniProtKB-UniPathway"/>
</dbReference>
<dbReference type="GO" id="GO:0009254">
    <property type="term" value="P:peptidoglycan turnover"/>
    <property type="evidence" value="ECO:0007669"/>
    <property type="project" value="TreeGrafter"/>
</dbReference>
<dbReference type="CDD" id="cd05007">
    <property type="entry name" value="SIS_Etherase"/>
    <property type="match status" value="1"/>
</dbReference>
<dbReference type="FunFam" id="1.10.8.1080:FF:000001">
    <property type="entry name" value="N-acetylmuramic acid 6-phosphate etherase"/>
    <property type="match status" value="1"/>
</dbReference>
<dbReference type="FunFam" id="3.40.50.10490:FF:000014">
    <property type="entry name" value="N-acetylmuramic acid 6-phosphate etherase"/>
    <property type="match status" value="1"/>
</dbReference>
<dbReference type="Gene3D" id="1.10.8.1080">
    <property type="match status" value="1"/>
</dbReference>
<dbReference type="Gene3D" id="3.40.50.10490">
    <property type="entry name" value="Glucose-6-phosphate isomerase like protein, domain 1"/>
    <property type="match status" value="1"/>
</dbReference>
<dbReference type="HAMAP" id="MF_00068">
    <property type="entry name" value="MurQ"/>
    <property type="match status" value="1"/>
</dbReference>
<dbReference type="InterPro" id="IPR005488">
    <property type="entry name" value="Etherase_MurQ"/>
</dbReference>
<dbReference type="InterPro" id="IPR005486">
    <property type="entry name" value="Glucokinase_regulatory_CS"/>
</dbReference>
<dbReference type="InterPro" id="IPR040190">
    <property type="entry name" value="MURQ/GCKR"/>
</dbReference>
<dbReference type="InterPro" id="IPR001347">
    <property type="entry name" value="SIS_dom"/>
</dbReference>
<dbReference type="InterPro" id="IPR046348">
    <property type="entry name" value="SIS_dom_sf"/>
</dbReference>
<dbReference type="NCBIfam" id="TIGR00274">
    <property type="entry name" value="N-acetylmuramic acid 6-phosphate etherase"/>
    <property type="match status" value="1"/>
</dbReference>
<dbReference type="NCBIfam" id="NF003915">
    <property type="entry name" value="PRK05441.1"/>
    <property type="match status" value="1"/>
</dbReference>
<dbReference type="NCBIfam" id="NF009222">
    <property type="entry name" value="PRK12570.1"/>
    <property type="match status" value="1"/>
</dbReference>
<dbReference type="PANTHER" id="PTHR10088">
    <property type="entry name" value="GLUCOKINASE REGULATORY PROTEIN"/>
    <property type="match status" value="1"/>
</dbReference>
<dbReference type="PANTHER" id="PTHR10088:SF4">
    <property type="entry name" value="GLUCOKINASE REGULATORY PROTEIN"/>
    <property type="match status" value="1"/>
</dbReference>
<dbReference type="Pfam" id="PF22645">
    <property type="entry name" value="GKRP_SIS_N"/>
    <property type="match status" value="1"/>
</dbReference>
<dbReference type="SUPFAM" id="SSF53697">
    <property type="entry name" value="SIS domain"/>
    <property type="match status" value="1"/>
</dbReference>
<dbReference type="PROSITE" id="PS01272">
    <property type="entry name" value="GCKR"/>
    <property type="match status" value="1"/>
</dbReference>
<dbReference type="PROSITE" id="PS51464">
    <property type="entry name" value="SIS"/>
    <property type="match status" value="1"/>
</dbReference>
<name>MURQ_CUTAK</name>
<sequence length="304" mass="31318">MDSLTNLATTEGRNPASEELDQLPTLDVLRLMNDEDHRVPDAIASQLPAIAAVVEAAVKGLSAGGRLIYAGAGTSGRLGVLDAAECPPTFSTNPTMVVGLIAGGQQAMFQAVEGAEDDADRGAEELNVLQPGPHDVVVGLAASGRTPWVVGVVRAAKRAGAVTASVCCNHRAVISSEVDLPVEIDAGPEVLTGSTRLKAGTVQKLVLNMISTATMVGLGKTYGNLMVDVSPSNEKLRQRAMSIVMAATGCSCDDAITALHEAGGHAKTAIVMVLLGMTATQARARLAEVGGVVRVAVDENHLRL</sequence>
<gene>
    <name evidence="1" type="primary">murQ</name>
    <name type="ordered locus">PPA1141</name>
</gene>
<proteinExistence type="inferred from homology"/>
<comment type="function">
    <text evidence="1">Specifically catalyzes the cleavage of the D-lactyl ether substituent of MurNAc 6-phosphate, producing GlcNAc 6-phosphate and D-lactate.</text>
</comment>
<comment type="catalytic activity">
    <reaction evidence="1">
        <text>N-acetyl-D-muramate 6-phosphate + H2O = N-acetyl-D-glucosamine 6-phosphate + (R)-lactate</text>
        <dbReference type="Rhea" id="RHEA:26410"/>
        <dbReference type="ChEBI" id="CHEBI:15377"/>
        <dbReference type="ChEBI" id="CHEBI:16004"/>
        <dbReference type="ChEBI" id="CHEBI:57513"/>
        <dbReference type="ChEBI" id="CHEBI:58722"/>
        <dbReference type="EC" id="4.2.1.126"/>
    </reaction>
</comment>
<comment type="pathway">
    <text evidence="1">Amino-sugar metabolism; N-acetylmuramate degradation.</text>
</comment>
<comment type="subunit">
    <text evidence="1">Homodimer.</text>
</comment>
<comment type="miscellaneous">
    <text evidence="1">A lyase-type mechanism (elimination/hydration) is suggested for the cleavage of the lactyl ether bond of MurNAc 6-phosphate, with the formation of an alpha,beta-unsaturated aldehyde intermediate with (E)-stereochemistry, followed by the syn addition of water to give product.</text>
</comment>
<comment type="similarity">
    <text evidence="1">Belongs to the GCKR-like family. MurNAc-6-P etherase subfamily.</text>
</comment>
<protein>
    <recommendedName>
        <fullName evidence="1">N-acetylmuramic acid 6-phosphate etherase</fullName>
        <shortName evidence="1">MurNAc-6-P etherase</shortName>
        <ecNumber evidence="1">4.2.1.126</ecNumber>
    </recommendedName>
    <alternativeName>
        <fullName evidence="1">N-acetylmuramic acid 6-phosphate hydrolase</fullName>
    </alternativeName>
    <alternativeName>
        <fullName evidence="1">N-acetylmuramic acid 6-phosphate lyase</fullName>
    </alternativeName>
</protein>
<accession>Q6A8M7</accession>
<keyword id="KW-0119">Carbohydrate metabolism</keyword>
<keyword id="KW-0456">Lyase</keyword>
<evidence type="ECO:0000255" key="1">
    <source>
        <dbReference type="HAMAP-Rule" id="MF_00068"/>
    </source>
</evidence>
<organism>
    <name type="scientific">Cutibacterium acnes (strain DSM 16379 / KPA171202)</name>
    <name type="common">Propionibacterium acnes</name>
    <dbReference type="NCBI Taxonomy" id="267747"/>
    <lineage>
        <taxon>Bacteria</taxon>
        <taxon>Bacillati</taxon>
        <taxon>Actinomycetota</taxon>
        <taxon>Actinomycetes</taxon>
        <taxon>Propionibacteriales</taxon>
        <taxon>Propionibacteriaceae</taxon>
        <taxon>Cutibacterium</taxon>
    </lineage>
</organism>